<proteinExistence type="evidence at protein level"/>
<keyword id="KW-0130">Cell adhesion</keyword>
<keyword id="KW-1003">Cell membrane</keyword>
<keyword id="KW-1015">Disulfide bond</keyword>
<keyword id="KW-0325">Glycoprotein</keyword>
<keyword id="KW-0375">Hydrogen ion transport</keyword>
<keyword id="KW-0406">Ion transport</keyword>
<keyword id="KW-0472">Membrane</keyword>
<keyword id="KW-0630">Potassium</keyword>
<keyword id="KW-0633">Potassium transport</keyword>
<keyword id="KW-1185">Reference proteome</keyword>
<keyword id="KW-0735">Signal-anchor</keyword>
<keyword id="KW-0812">Transmembrane</keyword>
<keyword id="KW-1133">Transmembrane helix</keyword>
<keyword id="KW-0813">Transport</keyword>
<organism>
    <name type="scientific">Oryctolagus cuniculus</name>
    <name type="common">Rabbit</name>
    <dbReference type="NCBI Taxonomy" id="9986"/>
    <lineage>
        <taxon>Eukaryota</taxon>
        <taxon>Metazoa</taxon>
        <taxon>Chordata</taxon>
        <taxon>Craniata</taxon>
        <taxon>Vertebrata</taxon>
        <taxon>Euteleostomi</taxon>
        <taxon>Mammalia</taxon>
        <taxon>Eutheria</taxon>
        <taxon>Euarchontoglires</taxon>
        <taxon>Glires</taxon>
        <taxon>Lagomorpha</taxon>
        <taxon>Leporidae</taxon>
        <taxon>Oryctolagus</taxon>
    </lineage>
</organism>
<reference key="1">
    <citation type="journal article" date="1990" name="Proc. Natl. Acad. Sci. U.S.A.">
        <title>Characterization of a beta subunit of the gastric H+/K(+)-transporting ATPase.</title>
        <authorList>
            <person name="Reuben M.A."/>
            <person name="Lasater L.S."/>
            <person name="Sachs G."/>
        </authorList>
    </citation>
    <scope>NUCLEOTIDE SEQUENCE [MRNA]</scope>
</reference>
<reference key="2">
    <citation type="journal article" date="1995" name="Am. J. Physiol.">
        <title>Human ATP1AL1 gene encodes a ouabain-sensitive H-K-ATPase.</title>
        <authorList>
            <person name="Modyanov N.N."/>
            <person name="Mathews P.M."/>
            <person name="Grishin A.V."/>
            <person name="Beguin P."/>
            <person name="Beggah A.T."/>
            <person name="Rossier B.C."/>
            <person name="Horisberger J.D."/>
            <person name="Geering K."/>
        </authorList>
    </citation>
    <scope>FUNCTION</scope>
    <scope>SUBUNIT</scope>
</reference>
<reference key="3">
    <citation type="journal article" date="2000" name="J. Biol. Chem.">
        <title>The roles of carbohydrate chains of the beta-subunit on the functional expression of gastric H(+),K(+)-ATPase.</title>
        <authorList>
            <person name="Asano S."/>
            <person name="Kawada K."/>
            <person name="Kimura T."/>
            <person name="Grishin A.V."/>
            <person name="Caplan M.J."/>
            <person name="Takeguchi N."/>
        </authorList>
    </citation>
    <scope>FUNCTION</scope>
    <scope>INTERACTION WITH ATP4A</scope>
    <scope>SUBCELLULAR LOCATION</scope>
    <scope>GLYCOSYLATION AT ASN-99; ASN-103; ASN-130; ASN-146; ASN-161; ASN-193 AND ASN-222</scope>
    <scope>MUTAGENESIS OF ASN-99; ASN-103; ASN-130; ASN-146; ASN-161; ASN-193 AND ASN-222</scope>
</reference>
<reference key="4">
    <citation type="journal article" date="2002" name="J. Biol. Chem.">
        <title>Mutational study on the roles of disulfide bonds in the beta-subunit of gastric H+,K+-ATPase.</title>
        <authorList>
            <person name="Kimura T."/>
            <person name="Tabuchi Y."/>
            <person name="Takeguchi N."/>
            <person name="Asano S."/>
        </authorList>
    </citation>
    <scope>FUNCTION</scope>
    <scope>INTERACTION WITH ATP4A</scope>
    <scope>MUTAGENESIS OF CYS-10; CYS-21; CYS-58; CYS-131; CYS-152; CYS-162; CYS-178; CYS-201 AND CYS-263</scope>
</reference>
<accession>P18597</accession>
<protein>
    <recommendedName>
        <fullName>Potassium-transporting ATPase subunit beta</fullName>
    </recommendedName>
    <alternativeName>
        <fullName>Gastric H(+)/K(+) ATPase subunit beta</fullName>
    </alternativeName>
    <alternativeName>
        <fullName>Proton pump beta chain</fullName>
    </alternativeName>
</protein>
<evidence type="ECO:0000250" key="1"/>
<evidence type="ECO:0000250" key="2">
    <source>
        <dbReference type="UniProtKB" id="P18434"/>
    </source>
</evidence>
<evidence type="ECO:0000250" key="3">
    <source>
        <dbReference type="UniProtKB" id="P19156"/>
    </source>
</evidence>
<evidence type="ECO:0000250" key="4">
    <source>
        <dbReference type="UniProtKB" id="P20648"/>
    </source>
</evidence>
<evidence type="ECO:0000250" key="5">
    <source>
        <dbReference type="UniProtKB" id="P51164"/>
    </source>
</evidence>
<evidence type="ECO:0000255" key="6"/>
<evidence type="ECO:0000269" key="7">
    <source>
    </source>
</evidence>
<evidence type="ECO:0000269" key="8">
    <source>
    </source>
</evidence>
<evidence type="ECO:0000269" key="9">
    <source>
    </source>
</evidence>
<evidence type="ECO:0000305" key="10"/>
<comment type="function">
    <text evidence="3 7 8 9">The beta subunit of the gastric H(+)/K(+) ATPase pump which transports H(+) ions in exchange for K(+) ions across the apical membrane of parietal cells (PubMed:10722662, PubMed:11909858, PubMed:7485470). Plays a structural and regulatory role in the assembly and membrane targeting of a functionally active pump (PubMed:10722662, PubMed:11909858, PubMed:7485470). Within a transport cycle, the transfer of a H(+) ion across the membrane is coupled to ATP hydrolysis and is associated with a transient phosphorylation of the alpha subunit that shifts the pump conformation from inward-facing (E1) to outward-facing state (E2) (By similarity). Interacts with the phosphorylation domain of the alpha subunit and functions as a ratchet, stabilizing the lumenal-open E2 conformation and preventing the reverse reaction of the transport cycle (By similarity).</text>
</comment>
<comment type="subunit">
    <text evidence="2 7 8 9">The ATPase pump is composed of two subunits: alpha (catalytic) and beta (regulatory). Interacts with alpha subunit ATP12A; this interaction is required for the formation of a functionally active pump and targeting at the plasma membrane (PubMed:7485470). Interacts (via N-terminus) with alpha subunit ATP4A (via the P-domain) (By similarity) (PubMed:10722662, PubMed:11909858).</text>
</comment>
<comment type="subcellular location">
    <subcellularLocation>
        <location evidence="4">Apical cell membrane</location>
        <topology evidence="6">Single-pass type II membrane protein</topology>
    </subcellularLocation>
    <subcellularLocation>
        <location evidence="7">Cell membrane</location>
        <topology evidence="6">Single-pass type II membrane protein</topology>
    </subcellularLocation>
    <text evidence="4">Localized in the apical canalicular membrane of parietal cells.</text>
</comment>
<comment type="domain">
    <text evidence="5">The C-terminal lobe folds into an immunoglobulin-like domain and mediates cell adhesion properties.</text>
</comment>
<comment type="PTM">
    <text evidence="7">N-glycosylation is necessary for assembly and functional expression of the pump at the plasma membrane.</text>
</comment>
<comment type="similarity">
    <text evidence="10">Belongs to the X(+)/potassium ATPases subunit beta family.</text>
</comment>
<sequence length="291" mass="33419">MAALQEKKSCSQRMEEFRHYCWNPDTGQMLGRTLSRWVWISLYYVAFYVVMTGLFALCIYVLMQTIDPYTPDYQDQLKSPGVTLRPDVYGEKGLEIHYNISDNRTWTSLTHTLRSFLAGYSPAAQVDNINCTSKTYFFQESFGAPNHTKFSCKFTADMLENCSGLTDPSFGFKEGKPCFIIKMNRIVRFLPSNSTPPRVDCTFLDMPHQALTPLQVEYYPPNGTFSLHYFPYYGKKAQPHYSNPLVAAKLLNVPTNTEVVVLCKILADHVTFDNPHDPYEGKVEFKLKIQK</sequence>
<name>ATP4B_RABIT</name>
<dbReference type="EMBL" id="M35544">
    <property type="protein sequence ID" value="AAA31256.1"/>
    <property type="molecule type" value="mRNA"/>
</dbReference>
<dbReference type="PIR" id="A36051">
    <property type="entry name" value="A36051"/>
</dbReference>
<dbReference type="RefSeq" id="NP_001075758.1">
    <property type="nucleotide sequence ID" value="NM_001082289.1"/>
</dbReference>
<dbReference type="SMR" id="P18597"/>
<dbReference type="BioGRID" id="1172148">
    <property type="interactions" value="3"/>
</dbReference>
<dbReference type="FunCoup" id="P18597">
    <property type="interactions" value="21"/>
</dbReference>
<dbReference type="STRING" id="9986.ENSOCUP00000021394"/>
<dbReference type="DrugCentral" id="P18597"/>
<dbReference type="GlyCosmos" id="P18597">
    <property type="glycosylation" value="7 sites, No reported glycans"/>
</dbReference>
<dbReference type="iPTMnet" id="P18597"/>
<dbReference type="PaxDb" id="9986-ENSOCUP00000021394"/>
<dbReference type="Ensembl" id="ENSOCUT00000028473.3">
    <property type="protein sequence ID" value="ENSOCUP00000021394.2"/>
    <property type="gene ID" value="ENSOCUG00000027254.3"/>
</dbReference>
<dbReference type="GeneID" id="100009125"/>
<dbReference type="KEGG" id="ocu:100009125"/>
<dbReference type="CTD" id="496"/>
<dbReference type="eggNOG" id="KOG3927">
    <property type="taxonomic scope" value="Eukaryota"/>
</dbReference>
<dbReference type="GeneTree" id="ENSGT01030000234579"/>
<dbReference type="HOGENOM" id="CLU_057702_1_1_1"/>
<dbReference type="InParanoid" id="P18597"/>
<dbReference type="OMA" id="APRVNCT"/>
<dbReference type="OrthoDB" id="5912413at2759"/>
<dbReference type="BRENDA" id="7.2.2.19">
    <property type="organism ID" value="1749"/>
</dbReference>
<dbReference type="Proteomes" id="UP000001811">
    <property type="component" value="Unplaced"/>
</dbReference>
<dbReference type="Bgee" id="ENSOCUG00000027254">
    <property type="expression patterns" value="Expressed in adult mammalian kidney and 1 other cell type or tissue"/>
</dbReference>
<dbReference type="GO" id="GO:0016324">
    <property type="term" value="C:apical plasma membrane"/>
    <property type="evidence" value="ECO:0007669"/>
    <property type="project" value="UniProtKB-SubCell"/>
</dbReference>
<dbReference type="GO" id="GO:0005783">
    <property type="term" value="C:endoplasmic reticulum"/>
    <property type="evidence" value="ECO:0000314"/>
    <property type="project" value="MGI"/>
</dbReference>
<dbReference type="GO" id="GO:0005886">
    <property type="term" value="C:plasma membrane"/>
    <property type="evidence" value="ECO:0000314"/>
    <property type="project" value="MGI"/>
</dbReference>
<dbReference type="GO" id="GO:0005890">
    <property type="term" value="C:sodium:potassium-exchanging ATPase complex"/>
    <property type="evidence" value="ECO:0007669"/>
    <property type="project" value="InterPro"/>
</dbReference>
<dbReference type="GO" id="GO:0001671">
    <property type="term" value="F:ATPase activator activity"/>
    <property type="evidence" value="ECO:0007669"/>
    <property type="project" value="TreeGrafter"/>
</dbReference>
<dbReference type="GO" id="GO:0008900">
    <property type="term" value="F:P-type potassium:proton transporter activity"/>
    <property type="evidence" value="ECO:0000314"/>
    <property type="project" value="MGI"/>
</dbReference>
<dbReference type="GO" id="GO:0007155">
    <property type="term" value="P:cell adhesion"/>
    <property type="evidence" value="ECO:0007669"/>
    <property type="project" value="UniProtKB-KW"/>
</dbReference>
<dbReference type="GO" id="GO:0030007">
    <property type="term" value="P:intracellular potassium ion homeostasis"/>
    <property type="evidence" value="ECO:0007669"/>
    <property type="project" value="TreeGrafter"/>
</dbReference>
<dbReference type="GO" id="GO:0006883">
    <property type="term" value="P:intracellular sodium ion homeostasis"/>
    <property type="evidence" value="ECO:0007669"/>
    <property type="project" value="TreeGrafter"/>
</dbReference>
<dbReference type="GO" id="GO:0045851">
    <property type="term" value="P:pH reduction"/>
    <property type="evidence" value="ECO:0000314"/>
    <property type="project" value="MGI"/>
</dbReference>
<dbReference type="GO" id="GO:1990573">
    <property type="term" value="P:potassium ion import across plasma membrane"/>
    <property type="evidence" value="ECO:0007669"/>
    <property type="project" value="TreeGrafter"/>
</dbReference>
<dbReference type="GO" id="GO:0010155">
    <property type="term" value="P:regulation of proton transport"/>
    <property type="evidence" value="ECO:0000314"/>
    <property type="project" value="MGI"/>
</dbReference>
<dbReference type="GO" id="GO:0036376">
    <property type="term" value="P:sodium ion export across plasma membrane"/>
    <property type="evidence" value="ECO:0007669"/>
    <property type="project" value="TreeGrafter"/>
</dbReference>
<dbReference type="FunFam" id="1.20.5.170:FF:000061">
    <property type="entry name" value="Sodium/potassium-transporting ATPase subunit beta"/>
    <property type="match status" value="1"/>
</dbReference>
<dbReference type="FunFam" id="2.60.40.1660:FF:000006">
    <property type="entry name" value="Sodium/potassium-transporting ATPase subunit beta"/>
    <property type="match status" value="1"/>
</dbReference>
<dbReference type="Gene3D" id="1.20.5.170">
    <property type="match status" value="1"/>
</dbReference>
<dbReference type="Gene3D" id="2.60.40.1660">
    <property type="entry name" value="Na, k-atpase alpha subunit"/>
    <property type="match status" value="1"/>
</dbReference>
<dbReference type="InterPro" id="IPR000402">
    <property type="entry name" value="Na/K_ATPase_sub_beta"/>
</dbReference>
<dbReference type="InterPro" id="IPR038702">
    <property type="entry name" value="Na/K_ATPase_sub_beta_sf"/>
</dbReference>
<dbReference type="NCBIfam" id="TIGR01107">
    <property type="entry name" value="Na_K_ATPase_bet"/>
    <property type="match status" value="1"/>
</dbReference>
<dbReference type="PANTHER" id="PTHR11523:SF11">
    <property type="entry name" value="POTASSIUM-TRANSPORTING ATPASE SUBUNIT BETA"/>
    <property type="match status" value="1"/>
</dbReference>
<dbReference type="PANTHER" id="PTHR11523">
    <property type="entry name" value="SODIUM/POTASSIUM-DEPENDENT ATPASE BETA SUBUNIT"/>
    <property type="match status" value="1"/>
</dbReference>
<dbReference type="Pfam" id="PF00287">
    <property type="entry name" value="Na_K-ATPase"/>
    <property type="match status" value="1"/>
</dbReference>
<dbReference type="PROSITE" id="PS00390">
    <property type="entry name" value="ATPASE_NA_K_BETA_1"/>
    <property type="match status" value="1"/>
</dbReference>
<dbReference type="PROSITE" id="PS00391">
    <property type="entry name" value="ATPASE_NA_K_BETA_2"/>
    <property type="match status" value="1"/>
</dbReference>
<feature type="chain" id="PRO_0000219094" description="Potassium-transporting ATPase subunit beta">
    <location>
        <begin position="1"/>
        <end position="291"/>
    </location>
</feature>
<feature type="topological domain" description="Cytoplasmic" evidence="6">
    <location>
        <begin position="1"/>
        <end position="36"/>
    </location>
</feature>
<feature type="transmembrane region" description="Helical; Signal-anchor for type II membrane protein" evidence="6">
    <location>
        <begin position="37"/>
        <end position="57"/>
    </location>
</feature>
<feature type="topological domain" description="Extracellular" evidence="6">
    <location>
        <begin position="58"/>
        <end position="291"/>
    </location>
</feature>
<feature type="region of interest" description="immunoglobulin-like" evidence="1">
    <location>
        <begin position="194"/>
        <end position="291"/>
    </location>
</feature>
<feature type="glycosylation site" description="N-linked (GlcNAc...) asparagine" evidence="7">
    <location>
        <position position="99"/>
    </location>
</feature>
<feature type="glycosylation site" description="N-linked (GlcNAc...) asparagine" evidence="7">
    <location>
        <position position="103"/>
    </location>
</feature>
<feature type="glycosylation site" description="N-linked (GlcNAc...) asparagine" evidence="7">
    <location>
        <position position="130"/>
    </location>
</feature>
<feature type="glycosylation site" description="N-linked (GlcNAc...) asparagine" evidence="7">
    <location>
        <position position="146"/>
    </location>
</feature>
<feature type="glycosylation site" description="N-linked (GlcNAc...) asparagine" evidence="7">
    <location>
        <position position="161"/>
    </location>
</feature>
<feature type="glycosylation site" description="N-linked (GlcNAc...) asparagine" evidence="7">
    <location>
        <position position="193"/>
    </location>
</feature>
<feature type="glycosylation site" description="N-linked (GlcNAc...) asparagine" evidence="7">
    <location>
        <position position="222"/>
    </location>
</feature>
<feature type="disulfide bond" evidence="2">
    <location>
        <begin position="131"/>
        <end position="152"/>
    </location>
</feature>
<feature type="disulfide bond" evidence="2">
    <location>
        <begin position="162"/>
        <end position="178"/>
    </location>
</feature>
<feature type="disulfide bond" evidence="2">
    <location>
        <begin position="201"/>
        <end position="263"/>
    </location>
</feature>
<feature type="mutagenesis site" description="Has no effect on pump ATPase activity." evidence="8">
    <original>C</original>
    <variation>S</variation>
    <location>
        <position position="10"/>
    </location>
</feature>
<feature type="mutagenesis site" description="Has no effect on pump ATPase activity." evidence="8">
    <original>C</original>
    <variation>S</variation>
    <location>
        <position position="21"/>
    </location>
</feature>
<feature type="mutagenesis site" description="Has no effect on pump ATPase activity." evidence="8">
    <original>C</original>
    <variation>S</variation>
    <location>
        <position position="58"/>
    </location>
</feature>
<feature type="mutagenesis site" description="Impairs pump targeting to the plasma membrane; when associated with Q-130 and Q-222. Loss of pump ATPase activity; when associated with Q-103; Q-130; Q-146; Q-161; Q-193 and Q-222." evidence="7">
    <original>N</original>
    <variation>Q</variation>
    <location>
        <position position="99"/>
    </location>
</feature>
<feature type="mutagenesis site" description="Loss of pump ATPase activity; when associated with Q-99; Q-130; Q-146; Q-161; Q-193 and Q-222." evidence="7">
    <original>N</original>
    <variation>Q</variation>
    <location>
        <position position="103"/>
    </location>
</feature>
<feature type="mutagenesis site" description="Impairs targeting to the plasma membrane; when associated with Q-99 and Q-222. Loss of pump ATPase activity; when associated with Q-99; Q-103; Q-146; Q-161; Q-193 and Q-222." evidence="7">
    <original>N</original>
    <variation>Q</variation>
    <location>
        <position position="130"/>
    </location>
</feature>
<feature type="mutagenesis site" description="Impairs the assembly of an active pump and its targeting to the plasma membrane; when associated with S-152." evidence="8">
    <original>C</original>
    <variation>S</variation>
    <location>
        <position position="131"/>
    </location>
</feature>
<feature type="mutagenesis site" description="Loss of pump ATPase activity; when associated with Q-99; Q-103; Q-130; Q-161; Q-193 and Q-222." evidence="7">
    <original>N</original>
    <variation>Q</variation>
    <location>
        <position position="146"/>
    </location>
</feature>
<feature type="mutagenesis site" description="Impairs the assembly of an active pump and its targeting to the plasma membrane; when associated with S-131." evidence="8">
    <original>C</original>
    <variation>S</variation>
    <location>
        <position position="152"/>
    </location>
</feature>
<feature type="mutagenesis site" description="Loss of pump ATPase activity; when associated with Q-99; Q-103; Q-130; Q-146; Q-193 and Q-222." evidence="7">
    <original>N</original>
    <variation>Q</variation>
    <location>
        <position position="161"/>
    </location>
</feature>
<feature type="mutagenesis site" description="Impairs the assembly of an active pump and its targeting to the plasma membrane; when associated with S-178." evidence="8">
    <original>C</original>
    <variation>S</variation>
    <location>
        <position position="162"/>
    </location>
</feature>
<feature type="mutagenesis site" description="Impairs the assembly of an active pump and its targeting to the plasma membrane; when associated with S-162." evidence="8">
    <original>C</original>
    <variation>S</variation>
    <location>
        <position position="178"/>
    </location>
</feature>
<feature type="mutagenesis site" description="Loss of pump ATPase activity; when associated with Q-99; Q-103; Q-130; Q-146; Q-161 and Q-222." evidence="7">
    <original>N</original>
    <variation>Q</variation>
    <location>
        <position position="193"/>
    </location>
</feature>
<feature type="mutagenesis site" description="Impairs the assembly of an active pump and its targeting to the plasma membrane; when associated with S-263." evidence="8">
    <original>C</original>
    <variation>S</variation>
    <location>
        <position position="201"/>
    </location>
</feature>
<feature type="mutagenesis site" description="Impairs targeting to the plasma membrane; when associated with Q-99 and Q-130. Loss of pump ATPase activity; when associated with Q-99; Q-103; Q-130; Q-146; Q-161 and Q-193." evidence="7">
    <original>N</original>
    <variation>Q</variation>
    <location>
        <position position="222"/>
    </location>
</feature>
<feature type="mutagenesis site" description="Impairs the assembly of an active pump and its targeting to the plasma membrane; when associated with S-201." evidence="8">
    <original>C</original>
    <variation>S</variation>
    <location>
        <position position="263"/>
    </location>
</feature>
<gene>
    <name type="primary">ATP4B</name>
</gene>